<gene>
    <name type="primary">arg2</name>
    <name type="ORF">AFUA_2G11490</name>
</gene>
<protein>
    <recommendedName>
        <fullName>Amino-acid acetyltransferase, mitochondrial</fullName>
        <ecNumber>2.3.1.1</ecNumber>
    </recommendedName>
    <alternativeName>
        <fullName>Arginine-requiring protein 2</fullName>
    </alternativeName>
    <alternativeName>
        <fullName>Glutamate N-acetyltransferase</fullName>
    </alternativeName>
    <alternativeName>
        <fullName>N-acetylglutamate synthase</fullName>
        <shortName>AGS</shortName>
        <shortName>NAGS</shortName>
    </alternativeName>
</protein>
<evidence type="ECO:0000250" key="1"/>
<evidence type="ECO:0000255" key="2"/>
<evidence type="ECO:0000255" key="3">
    <source>
        <dbReference type="PROSITE-ProRule" id="PRU00532"/>
    </source>
</evidence>
<evidence type="ECO:0000256" key="4">
    <source>
        <dbReference type="SAM" id="MobiDB-lite"/>
    </source>
</evidence>
<evidence type="ECO:0000305" key="5"/>
<organism>
    <name type="scientific">Aspergillus fumigatus (strain ATCC MYA-4609 / CBS 101355 / FGSC A1100 / Af293)</name>
    <name type="common">Neosartorya fumigata</name>
    <dbReference type="NCBI Taxonomy" id="330879"/>
    <lineage>
        <taxon>Eukaryota</taxon>
        <taxon>Fungi</taxon>
        <taxon>Dikarya</taxon>
        <taxon>Ascomycota</taxon>
        <taxon>Pezizomycotina</taxon>
        <taxon>Eurotiomycetes</taxon>
        <taxon>Eurotiomycetidae</taxon>
        <taxon>Eurotiales</taxon>
        <taxon>Aspergillaceae</taxon>
        <taxon>Aspergillus</taxon>
        <taxon>Aspergillus subgen. Fumigati</taxon>
    </lineage>
</organism>
<keyword id="KW-0012">Acyltransferase</keyword>
<keyword id="KW-0028">Amino-acid biosynthesis</keyword>
<keyword id="KW-0496">Mitochondrion</keyword>
<keyword id="KW-1185">Reference proteome</keyword>
<keyword id="KW-0808">Transferase</keyword>
<keyword id="KW-0809">Transit peptide</keyword>
<accession>Q4X122</accession>
<proteinExistence type="inferred from homology"/>
<comment type="function">
    <text evidence="1">N-acetylglutamate synthase involved in arginine biosynthesis.</text>
</comment>
<comment type="catalytic activity">
    <reaction>
        <text>L-glutamate + acetyl-CoA = N-acetyl-L-glutamate + CoA + H(+)</text>
        <dbReference type="Rhea" id="RHEA:24292"/>
        <dbReference type="ChEBI" id="CHEBI:15378"/>
        <dbReference type="ChEBI" id="CHEBI:29985"/>
        <dbReference type="ChEBI" id="CHEBI:44337"/>
        <dbReference type="ChEBI" id="CHEBI:57287"/>
        <dbReference type="ChEBI" id="CHEBI:57288"/>
        <dbReference type="EC" id="2.3.1.1"/>
    </reaction>
</comment>
<comment type="pathway">
    <text>Amino-acid biosynthesis; L-arginine biosynthesis; N(2)-acetyl-L-ornithine from L-glutamate: step 1/4.</text>
</comment>
<comment type="subcellular location">
    <subcellularLocation>
        <location evidence="1">Mitochondrion</location>
    </subcellularLocation>
</comment>
<comment type="similarity">
    <text evidence="5">Belongs to the acetyltransferase family.</text>
</comment>
<reference key="1">
    <citation type="journal article" date="2005" name="Nature">
        <title>Genomic sequence of the pathogenic and allergenic filamentous fungus Aspergillus fumigatus.</title>
        <authorList>
            <person name="Nierman W.C."/>
            <person name="Pain A."/>
            <person name="Anderson M.J."/>
            <person name="Wortman J.R."/>
            <person name="Kim H.S."/>
            <person name="Arroyo J."/>
            <person name="Berriman M."/>
            <person name="Abe K."/>
            <person name="Archer D.B."/>
            <person name="Bermejo C."/>
            <person name="Bennett J.W."/>
            <person name="Bowyer P."/>
            <person name="Chen D."/>
            <person name="Collins M."/>
            <person name="Coulsen R."/>
            <person name="Davies R."/>
            <person name="Dyer P.S."/>
            <person name="Farman M.L."/>
            <person name="Fedorova N."/>
            <person name="Fedorova N.D."/>
            <person name="Feldblyum T.V."/>
            <person name="Fischer R."/>
            <person name="Fosker N."/>
            <person name="Fraser A."/>
            <person name="Garcia J.L."/>
            <person name="Garcia M.J."/>
            <person name="Goble A."/>
            <person name="Goldman G.H."/>
            <person name="Gomi K."/>
            <person name="Griffith-Jones S."/>
            <person name="Gwilliam R."/>
            <person name="Haas B.J."/>
            <person name="Haas H."/>
            <person name="Harris D.E."/>
            <person name="Horiuchi H."/>
            <person name="Huang J."/>
            <person name="Humphray S."/>
            <person name="Jimenez J."/>
            <person name="Keller N."/>
            <person name="Khouri H."/>
            <person name="Kitamoto K."/>
            <person name="Kobayashi T."/>
            <person name="Konzack S."/>
            <person name="Kulkarni R."/>
            <person name="Kumagai T."/>
            <person name="Lafton A."/>
            <person name="Latge J.-P."/>
            <person name="Li W."/>
            <person name="Lord A."/>
            <person name="Lu C."/>
            <person name="Majoros W.H."/>
            <person name="May G.S."/>
            <person name="Miller B.L."/>
            <person name="Mohamoud Y."/>
            <person name="Molina M."/>
            <person name="Monod M."/>
            <person name="Mouyna I."/>
            <person name="Mulligan S."/>
            <person name="Murphy L.D."/>
            <person name="O'Neil S."/>
            <person name="Paulsen I."/>
            <person name="Penalva M.A."/>
            <person name="Pertea M."/>
            <person name="Price C."/>
            <person name="Pritchard B.L."/>
            <person name="Quail M.A."/>
            <person name="Rabbinowitsch E."/>
            <person name="Rawlins N."/>
            <person name="Rajandream M.A."/>
            <person name="Reichard U."/>
            <person name="Renauld H."/>
            <person name="Robson G.D."/>
            <person name="Rodriguez de Cordoba S."/>
            <person name="Rodriguez-Pena J.M."/>
            <person name="Ronning C.M."/>
            <person name="Rutter S."/>
            <person name="Salzberg S.L."/>
            <person name="Sanchez M."/>
            <person name="Sanchez-Ferrero J.C."/>
            <person name="Saunders D."/>
            <person name="Seeger K."/>
            <person name="Squares R."/>
            <person name="Squares S."/>
            <person name="Takeuchi M."/>
            <person name="Tekaia F."/>
            <person name="Turner G."/>
            <person name="Vazquez de Aldana C.R."/>
            <person name="Weidman J."/>
            <person name="White O."/>
            <person name="Woodward J.R."/>
            <person name="Yu J.-H."/>
            <person name="Fraser C.M."/>
            <person name="Galagan J.E."/>
            <person name="Asai K."/>
            <person name="Machida M."/>
            <person name="Hall N."/>
            <person name="Barrell B.G."/>
            <person name="Denning D.W."/>
        </authorList>
    </citation>
    <scope>NUCLEOTIDE SEQUENCE [LARGE SCALE GENOMIC DNA]</scope>
    <source>
        <strain>ATCC MYA-4609 / CBS 101355 / FGSC A1100 / Af293</strain>
    </source>
</reference>
<dbReference type="EC" id="2.3.1.1"/>
<dbReference type="EMBL" id="AAHF01000001">
    <property type="protein sequence ID" value="EAL93443.2"/>
    <property type="molecule type" value="Genomic_DNA"/>
</dbReference>
<dbReference type="RefSeq" id="XP_755481.2">
    <property type="nucleotide sequence ID" value="XM_750388.2"/>
</dbReference>
<dbReference type="SMR" id="Q4X122"/>
<dbReference type="FunCoup" id="Q4X122">
    <property type="interactions" value="102"/>
</dbReference>
<dbReference type="STRING" id="330879.Q4X122"/>
<dbReference type="EnsemblFungi" id="EAL93443">
    <property type="protein sequence ID" value="EAL93443"/>
    <property type="gene ID" value="AFUA_2G11490"/>
</dbReference>
<dbReference type="GeneID" id="3512781"/>
<dbReference type="KEGG" id="afm:AFUA_2G11490"/>
<dbReference type="VEuPathDB" id="FungiDB:Afu2g11490"/>
<dbReference type="eggNOG" id="KOG2436">
    <property type="taxonomic scope" value="Eukaryota"/>
</dbReference>
<dbReference type="HOGENOM" id="CLU_013088_0_0_1"/>
<dbReference type="InParanoid" id="Q4X122"/>
<dbReference type="OMA" id="NAMVRDC"/>
<dbReference type="OrthoDB" id="5585968at2759"/>
<dbReference type="UniPathway" id="UPA00068">
    <property type="reaction ID" value="UER00106"/>
</dbReference>
<dbReference type="Proteomes" id="UP000002530">
    <property type="component" value="Chromosome 2"/>
</dbReference>
<dbReference type="GO" id="GO:0005759">
    <property type="term" value="C:mitochondrial matrix"/>
    <property type="evidence" value="ECO:0000318"/>
    <property type="project" value="GO_Central"/>
</dbReference>
<dbReference type="GO" id="GO:0004042">
    <property type="term" value="F:L-glutamate N-acetyltransferase activity"/>
    <property type="evidence" value="ECO:0000318"/>
    <property type="project" value="GO_Central"/>
</dbReference>
<dbReference type="GO" id="GO:0006526">
    <property type="term" value="P:L-arginine biosynthetic process"/>
    <property type="evidence" value="ECO:0000318"/>
    <property type="project" value="GO_Central"/>
</dbReference>
<dbReference type="GO" id="GO:0006592">
    <property type="term" value="P:ornithine biosynthetic process"/>
    <property type="evidence" value="ECO:0000318"/>
    <property type="project" value="GO_Central"/>
</dbReference>
<dbReference type="FunFam" id="3.40.630.30:FF:000049">
    <property type="entry name" value="Amino-acid acetyltransferase, mitochondrial"/>
    <property type="match status" value="1"/>
</dbReference>
<dbReference type="Gene3D" id="3.40.630.30">
    <property type="match status" value="1"/>
</dbReference>
<dbReference type="InterPro" id="IPR011190">
    <property type="entry name" value="GlcNAc_Synth_fun"/>
</dbReference>
<dbReference type="InterPro" id="IPR006855">
    <property type="entry name" value="Vertebrate-like_GNAT_dom"/>
</dbReference>
<dbReference type="PANTHER" id="PTHR23342:SF4">
    <property type="entry name" value="AMINO-ACID ACETYLTRANSFERASE, MITOCHONDRIAL"/>
    <property type="match status" value="1"/>
</dbReference>
<dbReference type="PANTHER" id="PTHR23342">
    <property type="entry name" value="N-ACETYLGLUTAMATE SYNTHASE"/>
    <property type="match status" value="1"/>
</dbReference>
<dbReference type="Pfam" id="PF04768">
    <property type="entry name" value="NAT"/>
    <property type="match status" value="1"/>
</dbReference>
<dbReference type="PIRSF" id="PIRSF007892">
    <property type="entry name" value="NAGS_fungal"/>
    <property type="match status" value="1"/>
</dbReference>
<dbReference type="PROSITE" id="PS51731">
    <property type="entry name" value="GNAT_NAGS"/>
    <property type="match status" value="1"/>
</dbReference>
<feature type="transit peptide" description="Mitochondrion" evidence="2">
    <location>
        <begin position="1"/>
        <end position="44"/>
    </location>
</feature>
<feature type="chain" id="PRO_0000372552" description="Amino-acid acetyltransferase, mitochondrial">
    <location>
        <begin position="45"/>
        <end position="716"/>
    </location>
</feature>
<feature type="domain" description="N-acetyltransferase" evidence="3">
    <location>
        <begin position="537"/>
        <end position="706"/>
    </location>
</feature>
<feature type="region of interest" description="Disordered" evidence="4">
    <location>
        <begin position="37"/>
        <end position="58"/>
    </location>
</feature>
<feature type="region of interest" description="Disordered" evidence="4">
    <location>
        <begin position="96"/>
        <end position="121"/>
    </location>
</feature>
<feature type="compositionally biased region" description="Polar residues" evidence="4">
    <location>
        <begin position="37"/>
        <end position="56"/>
    </location>
</feature>
<feature type="compositionally biased region" description="Basic and acidic residues" evidence="4">
    <location>
        <begin position="101"/>
        <end position="112"/>
    </location>
</feature>
<sequence>MSLHTGWPRTVNSSFLKKHRSSLCTCQHTSSVLPRSFSTTPDRHVQQSADFSSTSRSYDRLGRRAREKLLDREFFLSLLSSATTKREAKSYLARLKAQHPKSPDANKPEPEKSATAPTLPSGVNLGSFYGASRSVYESPVFRQGPSPSAPPSLEPVERLHLALVRLSTPQSLDDNIIDGVAKTLSQLNRLGLTCCVVVDPGTEGVASALRQVAIEQADRLAVAIQKQPDSKSLRLDSVFSIDPSRPGLPQVFSRKALLNPLRHGHTVILTPIAYTEDVPRAIIVPANDAVIALTKELAGLASIPDPDEDPMVTAERIGRLQKEVSLDRVILLDPLGGIPAFNRRQPSHVFINMEQEYDDIENELLQAREMVPATETSLLKAGPNSVADNNPISKFVHAEVVPVPSGSTPELKTAVPQRSAIEGHLENLRVAQKALAMLPAASSGIITSPFEVASSAQTSPTSEFSAVGTRRQRNPLIHNLLTDKPLLSSSLPMSRRGPTNNGQGAVYPVTSHTTFVKRGMPLTMLPNPWTEPWTPQSRPRLKLDDPSIDLPRLVHLIEDSFDRKLDVQDYLNRVNDRLAGLIIAGEYEGGAILTWELPPGVEDDGSEASNARMVPYLDKFAVLKRSQGAGGVADIVFNAMVRSCFPNGVCWRSRKNNPVNKWYFERSLGTWKLSDTNWTMFWTTPGLVEDSQKFRDYEAVCRSIQPSWADDTGVVD</sequence>
<name>NAGS_ASPFU</name>